<evidence type="ECO:0000250" key="1">
    <source>
        <dbReference type="UniProtKB" id="P13569"/>
    </source>
</evidence>
<evidence type="ECO:0000250" key="2">
    <source>
        <dbReference type="UniProtKB" id="P26361"/>
    </source>
</evidence>
<evidence type="ECO:0000250" key="3">
    <source>
        <dbReference type="UniProtKB" id="P34158"/>
    </source>
</evidence>
<evidence type="ECO:0000255" key="4"/>
<evidence type="ECO:0000255" key="5">
    <source>
        <dbReference type="PROSITE-ProRule" id="PRU00434"/>
    </source>
</evidence>
<evidence type="ECO:0000255" key="6">
    <source>
        <dbReference type="PROSITE-ProRule" id="PRU00441"/>
    </source>
</evidence>
<evidence type="ECO:0000256" key="7">
    <source>
        <dbReference type="SAM" id="MobiDB-lite"/>
    </source>
</evidence>
<evidence type="ECO:0000305" key="8"/>
<reference key="1">
    <citation type="submission" date="2011-03" db="EMBL/GenBank/DDBJ databases">
        <title>Version 3 of the genome sequence of Otolemur garnettii(Bushbaby).</title>
        <authorList>
            <consortium name="The Broad Institute Genome Sequencing Platform"/>
            <person name="Di Palma F."/>
            <person name="Johnson J."/>
            <person name="Lander E.S."/>
            <person name="Lindblad-Toh K."/>
            <person name="Jaffe D.B."/>
            <person name="Gnerre S."/>
            <person name="MacCallum I."/>
            <person name="Przybylski D."/>
            <person name="Ribeiro F.J."/>
            <person name="Burton J.N."/>
            <person name="Walker B.J."/>
            <person name="Sharpe T."/>
            <person name="Hall G."/>
        </authorList>
    </citation>
    <scope>NUCLEOTIDE SEQUENCE [LARGE SCALE GENOMIC DNA]</scope>
</reference>
<name>CFTR_OTOGA</name>
<proteinExistence type="inferred from homology"/>
<feature type="chain" id="PRO_0000260780" description="Cystic fibrosis transmembrane conductance regulator">
    <location>
        <begin position="1"/>
        <end position="1482"/>
    </location>
</feature>
<feature type="topological domain" description="Cytoplasmic" evidence="1">
    <location>
        <begin position="1"/>
        <end position="77"/>
    </location>
</feature>
<feature type="transmembrane region" description="Helical; Name=1" evidence="1">
    <location>
        <begin position="78"/>
        <end position="98"/>
    </location>
</feature>
<feature type="topological domain" description="Extracellular" evidence="1">
    <location>
        <begin position="99"/>
        <end position="122"/>
    </location>
</feature>
<feature type="transmembrane region" description="Helical; Name=2" evidence="1">
    <location>
        <begin position="123"/>
        <end position="146"/>
    </location>
</feature>
<feature type="topological domain" description="Cytoplasmic" evidence="1">
    <location>
        <begin position="147"/>
        <end position="195"/>
    </location>
</feature>
<feature type="transmembrane region" description="Helical; Name=3" evidence="1">
    <location>
        <begin position="196"/>
        <end position="216"/>
    </location>
</feature>
<feature type="topological domain" description="Extracellular" evidence="1">
    <location>
        <begin position="217"/>
        <end position="222"/>
    </location>
</feature>
<feature type="transmembrane region" description="Helical; Name=4" evidence="1">
    <location>
        <begin position="223"/>
        <end position="243"/>
    </location>
</feature>
<feature type="topological domain" description="Cytoplasmic" evidence="1">
    <location>
        <begin position="244"/>
        <end position="298"/>
    </location>
</feature>
<feature type="transmembrane region" description="Helical; Name=5" evidence="1">
    <location>
        <begin position="299"/>
        <end position="319"/>
    </location>
</feature>
<feature type="topological domain" description="Extracellular" evidence="1">
    <location>
        <begin position="320"/>
        <end position="339"/>
    </location>
</feature>
<feature type="transmembrane region" description="Helical; Name=6" evidence="1">
    <location>
        <begin position="340"/>
        <end position="358"/>
    </location>
</feature>
<feature type="topological domain" description="Cytoplasmic" evidence="1">
    <location>
        <begin position="359"/>
        <end position="859"/>
    </location>
</feature>
<feature type="transmembrane region" description="Helical; Name=7" evidence="1">
    <location>
        <begin position="860"/>
        <end position="880"/>
    </location>
</feature>
<feature type="topological domain" description="Extracellular" evidence="1">
    <location>
        <begin position="881"/>
        <end position="919"/>
    </location>
</feature>
<feature type="transmembrane region" description="Discontinuously helical; Name=8" evidence="1">
    <location>
        <begin position="920"/>
        <end position="940"/>
    </location>
</feature>
<feature type="topological domain" description="Cytoplasmic" evidence="1">
    <location>
        <begin position="941"/>
        <end position="991"/>
    </location>
</feature>
<feature type="transmembrane region" description="Helical; Name=9" evidence="1">
    <location>
        <begin position="992"/>
        <end position="1012"/>
    </location>
</feature>
<feature type="topological domain" description="Extracellular" evidence="1">
    <location>
        <begin position="1013"/>
        <end position="1014"/>
    </location>
</feature>
<feature type="transmembrane region" description="Helical; Name=10" evidence="1">
    <location>
        <begin position="1015"/>
        <end position="1035"/>
    </location>
</feature>
<feature type="topological domain" description="Cytoplasmic" evidence="1">
    <location>
        <begin position="1036"/>
        <end position="1096"/>
    </location>
</feature>
<feature type="transmembrane region" description="Helical; Name=11" evidence="1">
    <location>
        <begin position="1097"/>
        <end position="1117"/>
    </location>
</feature>
<feature type="topological domain" description="Extracellular" evidence="1">
    <location>
        <begin position="1118"/>
        <end position="1131"/>
    </location>
</feature>
<feature type="transmembrane region" description="Helical; Name=12" evidence="1">
    <location>
        <begin position="1132"/>
        <end position="1152"/>
    </location>
</feature>
<feature type="topological domain" description="Cytoplasmic" evidence="1">
    <location>
        <begin position="1153"/>
        <end position="1482"/>
    </location>
</feature>
<feature type="domain" description="ABC transmembrane type-1 1" evidence="6">
    <location>
        <begin position="81"/>
        <end position="365"/>
    </location>
</feature>
<feature type="domain" description="ABC transporter 1" evidence="5">
    <location>
        <begin position="423"/>
        <end position="646"/>
    </location>
</feature>
<feature type="domain" description="ABC transmembrane type-1 2" evidence="6">
    <location>
        <begin position="860"/>
        <end position="1156"/>
    </location>
</feature>
<feature type="domain" description="ABC transporter 2" evidence="5">
    <location>
        <begin position="1212"/>
        <end position="1445"/>
    </location>
</feature>
<feature type="region of interest" description="Disordered R region" evidence="1">
    <location>
        <begin position="654"/>
        <end position="832"/>
    </location>
</feature>
<feature type="region of interest" description="Interaction with GORASP2" evidence="1">
    <location>
        <begin position="1388"/>
        <end position="1482"/>
    </location>
</feature>
<feature type="region of interest" description="Disordered" evidence="7">
    <location>
        <begin position="1450"/>
        <end position="1482"/>
    </location>
</feature>
<feature type="short sequence motif" description="PDZ-binding" evidence="1">
    <location>
        <begin position="1480"/>
        <end position="1482"/>
    </location>
</feature>
<feature type="compositionally biased region" description="Basic residues" evidence="7">
    <location>
        <begin position="1451"/>
        <end position="1463"/>
    </location>
</feature>
<feature type="compositionally biased region" description="Acidic residues" evidence="7">
    <location>
        <begin position="1472"/>
        <end position="1482"/>
    </location>
</feature>
<feature type="binding site" evidence="1">
    <location>
        <position position="401"/>
    </location>
    <ligand>
        <name>ATP</name>
        <dbReference type="ChEBI" id="CHEBI:30616"/>
        <label>1</label>
    </ligand>
</feature>
<feature type="binding site" evidence="5">
    <location>
        <begin position="458"/>
        <end position="465"/>
    </location>
    <ligand>
        <name>ATP</name>
        <dbReference type="ChEBI" id="CHEBI:30616"/>
        <label>1</label>
    </ligand>
</feature>
<feature type="binding site" evidence="2">
    <location>
        <position position="493"/>
    </location>
    <ligand>
        <name>ATP</name>
        <dbReference type="ChEBI" id="CHEBI:30616"/>
        <label>1</label>
    </ligand>
</feature>
<feature type="binding site" evidence="1">
    <location>
        <position position="1221"/>
    </location>
    <ligand>
        <name>ATP</name>
        <dbReference type="ChEBI" id="CHEBI:30616"/>
        <label>2</label>
    </ligand>
</feature>
<feature type="binding site" evidence="5">
    <location>
        <begin position="1246"/>
        <end position="1253"/>
    </location>
    <ligand>
        <name>ATP</name>
        <dbReference type="ChEBI" id="CHEBI:30616"/>
        <label>2</label>
    </ligand>
</feature>
<feature type="modified residue" description="Phosphoserine" evidence="1">
    <location>
        <position position="549"/>
    </location>
</feature>
<feature type="modified residue" description="Phosphoserine" evidence="1">
    <location>
        <position position="660"/>
    </location>
</feature>
<feature type="modified residue" description="Phosphoserine; by PKA" evidence="1">
    <location>
        <position position="670"/>
    </location>
</feature>
<feature type="modified residue" description="Phosphoserine" evidence="1">
    <location>
        <position position="686"/>
    </location>
</feature>
<feature type="modified residue" description="Phosphoserine" evidence="1">
    <location>
        <position position="700"/>
    </location>
</feature>
<feature type="modified residue" description="Phosphoserine" evidence="1">
    <location>
        <position position="712"/>
    </location>
</feature>
<feature type="modified residue" description="Phosphothreonine" evidence="1">
    <location>
        <position position="717"/>
    </location>
</feature>
<feature type="modified residue" description="Phosphoserine" evidence="1">
    <location>
        <position position="738"/>
    </location>
</feature>
<feature type="modified residue" description="Phosphoserine" evidence="1">
    <location>
        <position position="769"/>
    </location>
</feature>
<feature type="modified residue" description="Phosphoserine" evidence="1">
    <location>
        <position position="791"/>
    </location>
</feature>
<feature type="modified residue" description="Phosphoserine" evidence="1">
    <location>
        <position position="796"/>
    </location>
</feature>
<feature type="modified residue" description="Phosphoserine" evidence="1">
    <location>
        <position position="814"/>
    </location>
</feature>
<feature type="modified residue" description="Phosphoserine" evidence="1">
    <location>
        <position position="1446"/>
    </location>
</feature>
<feature type="modified residue" description="Phosphoserine" evidence="1">
    <location>
        <position position="1458"/>
    </location>
</feature>
<feature type="lipid moiety-binding region" description="S-palmitoyl cysteine" evidence="1">
    <location>
        <position position="524"/>
    </location>
</feature>
<feature type="lipid moiety-binding region" description="S-palmitoyl cysteine" evidence="1">
    <location>
        <position position="1397"/>
    </location>
</feature>
<feature type="glycosylation site" description="N-linked (GlcNAc...) asparagine" evidence="4">
    <location>
        <position position="895"/>
    </location>
</feature>
<feature type="glycosylation site" description="N-linked (GlcNAc...) asparagine" evidence="4">
    <location>
        <position position="901"/>
    </location>
</feature>
<feature type="cross-link" description="Glycyl lysine isopeptide (Lys-Gly) (interchain with G-Cter in ubiquitin)" evidence="1">
    <location>
        <position position="688"/>
    </location>
</feature>
<organism>
    <name type="scientific">Otolemur garnettii</name>
    <name type="common">Small-eared galago</name>
    <name type="synonym">Garnett's greater bushbaby</name>
    <dbReference type="NCBI Taxonomy" id="30611"/>
    <lineage>
        <taxon>Eukaryota</taxon>
        <taxon>Metazoa</taxon>
        <taxon>Chordata</taxon>
        <taxon>Craniata</taxon>
        <taxon>Vertebrata</taxon>
        <taxon>Euteleostomi</taxon>
        <taxon>Mammalia</taxon>
        <taxon>Eutheria</taxon>
        <taxon>Euarchontoglires</taxon>
        <taxon>Primates</taxon>
        <taxon>Strepsirrhini</taxon>
        <taxon>Lorisiformes</taxon>
        <taxon>Galagidae</taxon>
        <taxon>Otolemur</taxon>
    </lineage>
</organism>
<keyword id="KW-0067">ATP-binding</keyword>
<keyword id="KW-1003">Cell membrane</keyword>
<keyword id="KW-0868">Chloride</keyword>
<keyword id="KW-0869">Chloride channel</keyword>
<keyword id="KW-0256">Endoplasmic reticulum</keyword>
<keyword id="KW-0967">Endosome</keyword>
<keyword id="KW-0325">Glycoprotein</keyword>
<keyword id="KW-0407">Ion channel</keyword>
<keyword id="KW-0406">Ion transport</keyword>
<keyword id="KW-0413">Isomerase</keyword>
<keyword id="KW-1017">Isopeptide bond</keyword>
<keyword id="KW-0449">Lipoprotein</keyword>
<keyword id="KW-0472">Membrane</keyword>
<keyword id="KW-0547">Nucleotide-binding</keyword>
<keyword id="KW-0539">Nucleus</keyword>
<keyword id="KW-0564">Palmitate</keyword>
<keyword id="KW-0597">Phosphoprotein</keyword>
<keyword id="KW-1185">Reference proteome</keyword>
<keyword id="KW-0677">Repeat</keyword>
<keyword id="KW-0812">Transmembrane</keyword>
<keyword id="KW-1133">Transmembrane helix</keyword>
<keyword id="KW-0813">Transport</keyword>
<keyword id="KW-0832">Ubl conjugation</keyword>
<accession>Q2QLH0</accession>
<sequence>MQRSPLEKASVFSKLFFSWTRPILRKGYRQRLELSDIYQIPSADSADNLSEKLEREWDRELASKKNPKLINALRRCFFWRFMFYGILLYLGEVTKAVQPLLLGRIIASYDPDNKVERSIAIYLGIGLCLLFIVRTLLLHPAIFGLHHIGMQMRIAMFSLIYKKILKLSSRVLDKISIGQLVSLLSNNLNKFDEGLALAHFVWIAPLQVTLLMGLLWELLQASAFCGLGFLIVLALVQAGLGRMMMKYRDQRAGKINERLVITSEMIENIQSVKAYCWEEAMEKMIENLRQTELKLTRKAAYVRYFNSSAFFFSGFFVVFLSVLPYALIKGIILRKIFTTISFCIVLRMAVTRQFPWAVQTWYDSLGAINKIQDFLQKQEYKTLEYNLTTTEVVMENVTAFWEEGIGELFEKAKQNNDNRKISNGDNSLFFSNLALLGAPVLKDINFKIERGQLLAVAGSTGAGKTSLLMMIMGELEPSEGKIKHSGRISFCSQFSWIMPGTIKENIIFGVSYDEYRYRSVIKACQLEEDISKFAEKDNIVLGEGGITLSGGQRARISLARAVYKDADLYLLDSPFGYLDVLTEKEIFESCVCKLMANKTRILVTSKMEHLKKADKILILHEGSSYFYGTFSELQNLRPDFSSKLMGFDSFDQFSAERRNSILTETLRRFSLEGDAAVSRNETKKQSFKQTGEIGEKRKNSILNPINSIRKFSVVQKTPLPMNGIDEEDSEEPVERRLSLVPDSEQGEAILPRSNVFNTGPTFQGRRRQSVLNLMTHSVNQGQNIHRKTAASTRKMSLAPQANLTEMDIYSRRLSQESSLEISEEINEEYLKECFCDDVENIPAVTTWNTYLRYLAVNKSLSLVLIWCLVIFLAEVAISLAVLLLLDKSPRYSKGNGTASGNGSSAVIITSTSSYYLFYIYVGVADTLLALGFFRGLPLVHTLITVSKILHHRMLHSVLRAPMSTLNMLKAGGILNRFSKDIAILDDLLPLTIFDFVQLLLIVIGAVAVVSVLQPYIFLATVPVIAAFVILRGYFLHTSQQLKQLESEGRSPIFTHLVTSLKGLWTLRAFGRQPYFETLFHKALNLHTANWFLYLSTLRWFQMRIEMIFVVFFIAVTFISILTTGEGEGTVGIILTLAMNIMGTLQWAVNSSIDVDSLMRSVSRVFKFIDMPTEEGRSTKSIKPSKDCQLSKVMIFENLHVKKDDIWPSGGQMTVKDLTARYIDSGNAILENISFSISPGQRVGLLGRTGAGKSTLLSAFLRLLNTEGDIQIDGVSWDSITLQQWRKAFGVIPQKVFIFSGTFRKNLDPYEQWSDQEIWKVADEVGLRSVIEQFPGKLDFVLVDGGYVLSHGHKQLMCLARSVLSKAKILLLDEPSAHLDPITYQIIRRTLKQAFADCTVILCEHRIEAMLECQRFLVIEENKVRQYDSIQKLLSEKSLFRQAISPSDRMKLFPRRNSSKHKSRSPITALKEETEEEVQETRL</sequence>
<comment type="function">
    <text evidence="1 2">Epithelial ion channel that plays an important role in the regulation of epithelial ion and water transport and fluid homeostasis. Mediates the transport of chloride ions across the cell membrane (By similarity). Possesses an intrinsic ATPase activity and utilizes ATP to gate its channel; the passive flow of anions through the channel is gated by cycles of ATP binding and hydrolysis by the ATP-binding domains (By similarity). The ion channel is also permeable to HCO(3)(-); selectivity depends on the extracellular chloride concentration. Exerts its function also by modulating the activity of other ion channels and transporters. Contributes to the regulation of the pH and the ion content of the epithelial fluid layer. Modulates the activity of the epithelial sodium channel (ENaC) complex, in part by regulating the cell surface expression of the ENaC complex. May regulate bicarbonate secretion and salvage in epithelial cells by regulating the transporter SLC4A7. Can inhibit the chloride channel activity of ANO1 (By similarity). Plays a role in the chloride and bicarbonate homeostasis during sperm epididymal maturation and capacitation (By similarity).</text>
</comment>
<comment type="catalytic activity">
    <reaction evidence="1">
        <text>ATP + H2O + closed Cl(-) channel = ADP + phosphate + open Cl(-) channel.</text>
        <dbReference type="EC" id="5.6.1.6"/>
    </reaction>
</comment>
<comment type="catalytic activity">
    <reaction evidence="1">
        <text>chloride(in) = chloride(out)</text>
        <dbReference type="Rhea" id="RHEA:29823"/>
        <dbReference type="ChEBI" id="CHEBI:17996"/>
    </reaction>
</comment>
<comment type="catalytic activity">
    <reaction evidence="1">
        <text>hydrogencarbonate(in) = hydrogencarbonate(out)</text>
        <dbReference type="Rhea" id="RHEA:28695"/>
        <dbReference type="ChEBI" id="CHEBI:17544"/>
    </reaction>
</comment>
<comment type="catalytic activity">
    <reaction evidence="1">
        <text>ATP + H2O = ADP + phosphate + H(+)</text>
        <dbReference type="Rhea" id="RHEA:13065"/>
        <dbReference type="ChEBI" id="CHEBI:15377"/>
        <dbReference type="ChEBI" id="CHEBI:15378"/>
        <dbReference type="ChEBI" id="CHEBI:30616"/>
        <dbReference type="ChEBI" id="CHEBI:43474"/>
        <dbReference type="ChEBI" id="CHEBI:456216"/>
    </reaction>
    <physiologicalReaction direction="left-to-right" evidence="1">
        <dbReference type="Rhea" id="RHEA:13066"/>
    </physiologicalReaction>
</comment>
<comment type="subunit">
    <text evidence="1 2 3">Monomer; does not require oligomerization for channel activity. May form oligomers in the membrane (By similarity). Interacts with SLC26A3, SLC26A6 and NHERF1 (By similarity). Interacts with SHANK2 (By similarity). Interacts with MYO6 (By similarity). Interacts (via C-terminus) with GOPC (via PDZ domain); this promotes CFTR internalization and thereby decreases channel activity. Interacts with SLC4A7 through NHERF1. Found in a complex with MYO5B and RAB11A. Interacts with ANO1. Interacts with SLC26A8 (By similarity). Interacts with AHCYL1; the interaction increases CFTR activity (By similarity). Interacts with CSE1L (By similarity). The core-glycosylated form interacts with GORASP2 (via PDZ GRASP-type 1 domain) in respone to ER stress (By similarity). Interacts with MARCHF2; the interaction leads to CFTR ubiqtuitination and degradation (By similarity). Interacts with ADGRG2 (By similarity).</text>
</comment>
<comment type="subcellular location">
    <subcellularLocation>
        <location evidence="2">Apical cell membrane</location>
        <topology evidence="1">Multi-pass membrane protein</topology>
    </subcellularLocation>
    <subcellularLocation>
        <location evidence="1">Early endosome membrane</location>
        <topology evidence="1">Multi-pass membrane protein</topology>
    </subcellularLocation>
    <subcellularLocation>
        <location evidence="2">Cell membrane</location>
        <topology evidence="1">Multi-pass membrane protein</topology>
    </subcellularLocation>
    <subcellularLocation>
        <location evidence="1">Recycling endosome membrane</location>
        <topology evidence="1">Multi-pass membrane protein</topology>
    </subcellularLocation>
    <subcellularLocation>
        <location evidence="1">Endoplasmic reticulum membrane</location>
        <topology evidence="1">Multi-pass membrane protein</topology>
    </subcellularLocation>
    <subcellularLocation>
        <location evidence="3">Nucleus</location>
    </subcellularLocation>
    <text evidence="1 3">The channel is internalized from the cell surface into an endosomal recycling compartment, from where it is recycled to the cell membrane. In the oviduct and bronchus, detected on the apical side of epithelial cells, but not associated with cilia. In Sertoli cells, a processed product is detected in the nucleus. ER stress induces GORASP2-mediated unconventional (ER/Golgi-independent) trafficking of core-glycosylated CFTR to cell membrane.</text>
</comment>
<comment type="domain">
    <text evidence="1 2">Binds and hydrolyzes ATP via the two cytoplasmic ABC transporter nucleotide-binding domains. The two ATP-binding domains interact with each other, forming a head-to-tail dimer. Normal ATPase activity requires interaction between the two domains. The first ABC transporter nucleotide-binding domain has no ATPase activity by itself.</text>
</comment>
<comment type="domain">
    <text evidence="1">The PDZ-binding motif mediates interactions with GOPC and with the SLC4A7, NHERF1/EBP50 complex.</text>
</comment>
<comment type="domain">
    <text evidence="1">The disordered R region mediates channel activation when it is phosphorylated, but not in the absence of phosphorylation.</text>
</comment>
<comment type="PTM">
    <text evidence="1">N-glycosylated.</text>
</comment>
<comment type="PTM">
    <text evidence="1">Phosphorylated; cAMP treatment promotes phosphorylation and activates the channel. Dephosphorylation decreases the ATPase activity (in vitro). Phosphorylation at PKA sites activates the channel. Phosphorylation at PKC sites enhances the response to phosphorylation by PKA. Phosphorylated by AMPK; this inhibits channel activity.</text>
</comment>
<comment type="PTM">
    <text evidence="1">Ubiquitinated, leading to its degradation in the lysosome. Deubiquitination by USP10 in early endosomes enhances its endocytic recycling to the cell membrane. Ubiquitinated by RNF185 during ER stress. Ubiquitinated by MARCHF2 (By similarity).</text>
</comment>
<comment type="similarity">
    <text evidence="8">Belongs to the ABC transporter superfamily. ABCC family. CFTR transporter (TC 3.A.1.202) subfamily.</text>
</comment>
<protein>
    <recommendedName>
        <fullName evidence="1">Cystic fibrosis transmembrane conductance regulator</fullName>
        <shortName>CFTR</shortName>
    </recommendedName>
    <alternativeName>
        <fullName>ATP-binding cassette sub-family C member 7</fullName>
    </alternativeName>
    <alternativeName>
        <fullName>Channel conductance-controlling ATPase</fullName>
        <ecNumber evidence="1">5.6.1.6</ecNumber>
    </alternativeName>
    <alternativeName>
        <fullName>cAMP-dependent chloride channel</fullName>
    </alternativeName>
</protein>
<gene>
    <name evidence="1" type="primary">CFTR</name>
    <name type="synonym">ABCC7</name>
</gene>
<dbReference type="EC" id="5.6.1.6" evidence="1"/>
<dbReference type="EMBL" id="DP000013">
    <property type="protein sequence ID" value="ABA90408.1"/>
    <property type="molecule type" value="Genomic_DNA"/>
</dbReference>
<dbReference type="SMR" id="Q2QLH0"/>
<dbReference type="FunCoup" id="Q2QLH0">
    <property type="interactions" value="531"/>
</dbReference>
<dbReference type="STRING" id="30611.ENSOGAP00000001566"/>
<dbReference type="GlyCosmos" id="Q2QLH0">
    <property type="glycosylation" value="2 sites, No reported glycans"/>
</dbReference>
<dbReference type="eggNOG" id="KOG0054">
    <property type="taxonomic scope" value="Eukaryota"/>
</dbReference>
<dbReference type="InParanoid" id="Q2QLH0"/>
<dbReference type="Proteomes" id="UP000005225">
    <property type="component" value="Unassembled WGS sequence"/>
</dbReference>
<dbReference type="GO" id="GO:0016324">
    <property type="term" value="C:apical plasma membrane"/>
    <property type="evidence" value="ECO:0000250"/>
    <property type="project" value="UniProtKB"/>
</dbReference>
<dbReference type="GO" id="GO:0034707">
    <property type="term" value="C:chloride channel complex"/>
    <property type="evidence" value="ECO:0007669"/>
    <property type="project" value="UniProtKB-KW"/>
</dbReference>
<dbReference type="GO" id="GO:0005829">
    <property type="term" value="C:cytosol"/>
    <property type="evidence" value="ECO:0007669"/>
    <property type="project" value="TreeGrafter"/>
</dbReference>
<dbReference type="GO" id="GO:0005769">
    <property type="term" value="C:early endosome"/>
    <property type="evidence" value="ECO:0000250"/>
    <property type="project" value="UniProtKB"/>
</dbReference>
<dbReference type="GO" id="GO:0031901">
    <property type="term" value="C:early endosome membrane"/>
    <property type="evidence" value="ECO:0007669"/>
    <property type="project" value="UniProtKB-SubCell"/>
</dbReference>
<dbReference type="GO" id="GO:0005789">
    <property type="term" value="C:endoplasmic reticulum membrane"/>
    <property type="evidence" value="ECO:0000250"/>
    <property type="project" value="UniProtKB"/>
</dbReference>
<dbReference type="GO" id="GO:0016020">
    <property type="term" value="C:membrane"/>
    <property type="evidence" value="ECO:0000250"/>
    <property type="project" value="UniProtKB"/>
</dbReference>
<dbReference type="GO" id="GO:0005634">
    <property type="term" value="C:nucleus"/>
    <property type="evidence" value="ECO:0000250"/>
    <property type="project" value="UniProtKB"/>
</dbReference>
<dbReference type="GO" id="GO:0005886">
    <property type="term" value="C:plasma membrane"/>
    <property type="evidence" value="ECO:0000250"/>
    <property type="project" value="UniProtKB"/>
</dbReference>
<dbReference type="GO" id="GO:0055038">
    <property type="term" value="C:recycling endosome membrane"/>
    <property type="evidence" value="ECO:0007669"/>
    <property type="project" value="UniProtKB-SubCell"/>
</dbReference>
<dbReference type="GO" id="GO:0140359">
    <property type="term" value="F:ABC-type transporter activity"/>
    <property type="evidence" value="ECO:0007669"/>
    <property type="project" value="InterPro"/>
</dbReference>
<dbReference type="GO" id="GO:0005524">
    <property type="term" value="F:ATP binding"/>
    <property type="evidence" value="ECO:0007669"/>
    <property type="project" value="UniProtKB-KW"/>
</dbReference>
<dbReference type="GO" id="GO:0016887">
    <property type="term" value="F:ATP hydrolysis activity"/>
    <property type="evidence" value="ECO:0000250"/>
    <property type="project" value="UniProtKB"/>
</dbReference>
<dbReference type="GO" id="GO:0015106">
    <property type="term" value="F:bicarbonate transmembrane transporter activity"/>
    <property type="evidence" value="ECO:0000250"/>
    <property type="project" value="UniProtKB"/>
</dbReference>
<dbReference type="GO" id="GO:0005254">
    <property type="term" value="F:chloride channel activity"/>
    <property type="evidence" value="ECO:0000250"/>
    <property type="project" value="UniProtKB"/>
</dbReference>
<dbReference type="GO" id="GO:0019869">
    <property type="term" value="F:chloride channel inhibitor activity"/>
    <property type="evidence" value="ECO:0000250"/>
    <property type="project" value="UniProtKB"/>
</dbReference>
<dbReference type="GO" id="GO:0015108">
    <property type="term" value="F:chloride transmembrane transporter activity"/>
    <property type="evidence" value="ECO:0000250"/>
    <property type="project" value="UniProtKB"/>
</dbReference>
<dbReference type="GO" id="GO:0005260">
    <property type="term" value="F:intracellularly ATP-gated chloride channel activity"/>
    <property type="evidence" value="ECO:0000250"/>
    <property type="project" value="UniProtKB"/>
</dbReference>
<dbReference type="GO" id="GO:0015701">
    <property type="term" value="P:bicarbonate transport"/>
    <property type="evidence" value="ECO:0000250"/>
    <property type="project" value="UniProtKB"/>
</dbReference>
<dbReference type="GO" id="GO:0071320">
    <property type="term" value="P:cellular response to cAMP"/>
    <property type="evidence" value="ECO:0000250"/>
    <property type="project" value="UniProtKB"/>
</dbReference>
<dbReference type="GO" id="GO:1904322">
    <property type="term" value="P:cellular response to forskolin"/>
    <property type="evidence" value="ECO:0000250"/>
    <property type="project" value="UniProtKB"/>
</dbReference>
<dbReference type="GO" id="GO:1902476">
    <property type="term" value="P:chloride transmembrane transport"/>
    <property type="evidence" value="ECO:0000250"/>
    <property type="project" value="UniProtKB"/>
</dbReference>
<dbReference type="GO" id="GO:0051454">
    <property type="term" value="P:intracellular pH elevation"/>
    <property type="evidence" value="ECO:0000250"/>
    <property type="project" value="UniProtKB"/>
</dbReference>
<dbReference type="GO" id="GO:0060081">
    <property type="term" value="P:membrane hyperpolarization"/>
    <property type="evidence" value="ECO:0000250"/>
    <property type="project" value="UniProtKB"/>
</dbReference>
<dbReference type="GO" id="GO:0050891">
    <property type="term" value="P:multicellular organismal-level water homeostasis"/>
    <property type="evidence" value="ECO:0000250"/>
    <property type="project" value="UniProtKB"/>
</dbReference>
<dbReference type="GO" id="GO:0034976">
    <property type="term" value="P:response to endoplasmic reticulum stress"/>
    <property type="evidence" value="ECO:0000250"/>
    <property type="project" value="UniProtKB"/>
</dbReference>
<dbReference type="GO" id="GO:0048240">
    <property type="term" value="P:sperm capacitation"/>
    <property type="evidence" value="ECO:0000250"/>
    <property type="project" value="UniProtKB"/>
</dbReference>
<dbReference type="GO" id="GO:0035377">
    <property type="term" value="P:transepithelial water transport"/>
    <property type="evidence" value="ECO:0000250"/>
    <property type="project" value="UniProtKB"/>
</dbReference>
<dbReference type="CDD" id="cd18594">
    <property type="entry name" value="ABC_6TM_CFTR_D1"/>
    <property type="match status" value="1"/>
</dbReference>
<dbReference type="CDD" id="cd18600">
    <property type="entry name" value="ABC_6TM_CFTR_D2"/>
    <property type="match status" value="1"/>
</dbReference>
<dbReference type="CDD" id="cd03291">
    <property type="entry name" value="ABCC_CFTR1"/>
    <property type="match status" value="1"/>
</dbReference>
<dbReference type="CDD" id="cd03289">
    <property type="entry name" value="ABCC_CFTR2"/>
    <property type="match status" value="1"/>
</dbReference>
<dbReference type="FunFam" id="1.20.1560.10:FF:000017">
    <property type="entry name" value="Cystic fibrosis transmembrane conductance regulator"/>
    <property type="match status" value="1"/>
</dbReference>
<dbReference type="FunFam" id="1.20.1560.10:FF:000019">
    <property type="entry name" value="Cystic fibrosis transmembrane conductance regulator"/>
    <property type="match status" value="1"/>
</dbReference>
<dbReference type="FunFam" id="3.40.50.300:FF:000581">
    <property type="entry name" value="Cystic fibrosis transmembrane conductance regulator"/>
    <property type="match status" value="1"/>
</dbReference>
<dbReference type="FunFam" id="3.40.50.300:FF:000591">
    <property type="entry name" value="Cystic fibrosis transmembrane conductance regulator"/>
    <property type="match status" value="1"/>
</dbReference>
<dbReference type="Gene3D" id="1.20.1560.10">
    <property type="entry name" value="ABC transporter type 1, transmembrane domain"/>
    <property type="match status" value="2"/>
</dbReference>
<dbReference type="Gene3D" id="3.40.50.300">
    <property type="entry name" value="P-loop containing nucleotide triphosphate hydrolases"/>
    <property type="match status" value="2"/>
</dbReference>
<dbReference type="InterPro" id="IPR003593">
    <property type="entry name" value="AAA+_ATPase"/>
</dbReference>
<dbReference type="InterPro" id="IPR011527">
    <property type="entry name" value="ABC1_TM_dom"/>
</dbReference>
<dbReference type="InterPro" id="IPR036640">
    <property type="entry name" value="ABC1_TM_sf"/>
</dbReference>
<dbReference type="InterPro" id="IPR003439">
    <property type="entry name" value="ABC_transporter-like_ATP-bd"/>
</dbReference>
<dbReference type="InterPro" id="IPR017871">
    <property type="entry name" value="ABC_transporter-like_CS"/>
</dbReference>
<dbReference type="InterPro" id="IPR050173">
    <property type="entry name" value="ABC_transporter_C-like"/>
</dbReference>
<dbReference type="InterPro" id="IPR009147">
    <property type="entry name" value="CFTR/ABCC7"/>
</dbReference>
<dbReference type="InterPro" id="IPR047082">
    <property type="entry name" value="CFTR1_ATP-bd_dom1"/>
</dbReference>
<dbReference type="InterPro" id="IPR025837">
    <property type="entry name" value="CFTR_reg_dom"/>
</dbReference>
<dbReference type="InterPro" id="IPR027417">
    <property type="entry name" value="P-loop_NTPase"/>
</dbReference>
<dbReference type="NCBIfam" id="TIGR01271">
    <property type="entry name" value="CFTR_protein"/>
    <property type="match status" value="1"/>
</dbReference>
<dbReference type="PANTHER" id="PTHR24223">
    <property type="entry name" value="ATP-BINDING CASSETTE SUB-FAMILY C"/>
    <property type="match status" value="1"/>
</dbReference>
<dbReference type="PANTHER" id="PTHR24223:SF19">
    <property type="entry name" value="CYSTIC FIBROSIS TRANSMEMBRANE CONDUCTANCE REGULATOR"/>
    <property type="match status" value="1"/>
</dbReference>
<dbReference type="Pfam" id="PF00664">
    <property type="entry name" value="ABC_membrane"/>
    <property type="match status" value="2"/>
</dbReference>
<dbReference type="Pfam" id="PF00005">
    <property type="entry name" value="ABC_tran"/>
    <property type="match status" value="2"/>
</dbReference>
<dbReference type="Pfam" id="PF14396">
    <property type="entry name" value="CFTR_R"/>
    <property type="match status" value="1"/>
</dbReference>
<dbReference type="PRINTS" id="PR01851">
    <property type="entry name" value="CYSFIBREGLTR"/>
</dbReference>
<dbReference type="SMART" id="SM00382">
    <property type="entry name" value="AAA"/>
    <property type="match status" value="2"/>
</dbReference>
<dbReference type="SUPFAM" id="SSF90123">
    <property type="entry name" value="ABC transporter transmembrane region"/>
    <property type="match status" value="2"/>
</dbReference>
<dbReference type="SUPFAM" id="SSF52540">
    <property type="entry name" value="P-loop containing nucleoside triphosphate hydrolases"/>
    <property type="match status" value="2"/>
</dbReference>
<dbReference type="PROSITE" id="PS50929">
    <property type="entry name" value="ABC_TM1F"/>
    <property type="match status" value="2"/>
</dbReference>
<dbReference type="PROSITE" id="PS00211">
    <property type="entry name" value="ABC_TRANSPORTER_1"/>
    <property type="match status" value="1"/>
</dbReference>
<dbReference type="PROSITE" id="PS50893">
    <property type="entry name" value="ABC_TRANSPORTER_2"/>
    <property type="match status" value="2"/>
</dbReference>